<sequence length="851" mass="95475">MMIGKLKYLMLGGCLILGSCLALGGCLMLLGACSSSSLVSPRERSDFNADWRFHLGDGLQAAQPGFADNDWRVLDLPHDWAIEGDFSQENPSGTGGGALPGGVGWYRKTFSVDKADAGKIFRIEFDGVYMNSEVFINGVSLGVRPYGYISFSYDLTPYLKWDEPNVLAVRVDNAEQPNSRWYSGCGIYRNVWLSKTGPIHVGGWGTYVTTSSVDEKQAVLNLATTLVNESDTNENVTVCSSLQDAEGREVAETRSSGEAEAGKEVVFTQQLTVKQPQLWDIDTPYLYTLVTKVMRNEECMDRYTTPVGIRTFSLDARKGFTLNGRQTKINGVCMHHDLGCLGAAVNTRAIERHLQILKEMGCNGIRCSHNPPAPELLDLCDRMGFIVMDEAFDMWRKKKTAHDYARYFNEWHERDLNDFILRDRNHPSVFMWSIGNEVLEQWSDAKADTLSLEEANLILNFGHSSEMLAKEGEESVNSLLTKKLVSFVKGLDPTRPVTAGCNEPNSGNHLFRSGVLDVIGYNYHNKDIPNVPANFPDKPFIITESNSALMTRGYYRMPSDRMFIWPKRWDKSFADSTFACSSYENCHVPWGNTHEESLKLVRDNDFISGQYVWTGFDYIGEPTPYGWPARSSYFGIVDLAGFPKDVYYLYQSEWTDKQVLHLFPHWNWTPGQEIDMWCYYNQADEVELFVNGKSQGVKRKDLDNLHVAWRVKFEPGTVKVIARESGKVVAEKEICTAGKPAEIRLTPDRSILTADGKDLCFVTVEVLDEKGNLCPDADNLVNFTVQGNGFIAGVDNGNPVSMERFKDEKRKAFYGKCLVVIQNDGKPGKAKLTATSEGLRQAVLKISAEEL</sequence>
<name>BGH2A_BACO1</name>
<dbReference type="EC" id="3.2.1.23"/>
<dbReference type="EMBL" id="AAXF02000049">
    <property type="protein sequence ID" value="EDO11436.1"/>
    <property type="molecule type" value="Genomic_DNA"/>
</dbReference>
<dbReference type="SMR" id="A7LXS9"/>
<dbReference type="CAZy" id="GH2">
    <property type="family name" value="Glycoside Hydrolase Family 2"/>
</dbReference>
<dbReference type="eggNOG" id="COG3250">
    <property type="taxonomic scope" value="Bacteria"/>
</dbReference>
<dbReference type="HOGENOM" id="CLU_006501_0_1_10"/>
<dbReference type="SABIO-RK" id="A7LXS9"/>
<dbReference type="UniPathway" id="UPA01045"/>
<dbReference type="Proteomes" id="UP000005475">
    <property type="component" value="Unassembled WGS sequence"/>
</dbReference>
<dbReference type="GO" id="GO:0005886">
    <property type="term" value="C:plasma membrane"/>
    <property type="evidence" value="ECO:0007669"/>
    <property type="project" value="UniProtKB-SubCell"/>
</dbReference>
<dbReference type="GO" id="GO:0004565">
    <property type="term" value="F:beta-galactosidase activity"/>
    <property type="evidence" value="ECO:0000314"/>
    <property type="project" value="UniProtKB"/>
</dbReference>
<dbReference type="GO" id="GO:0085030">
    <property type="term" value="P:symbiotic process benefiting host"/>
    <property type="evidence" value="ECO:0000314"/>
    <property type="project" value="UniProtKB"/>
</dbReference>
<dbReference type="GO" id="GO:2000899">
    <property type="term" value="P:xyloglucan catabolic process"/>
    <property type="evidence" value="ECO:0000314"/>
    <property type="project" value="UniProtKB"/>
</dbReference>
<dbReference type="Gene3D" id="2.60.120.260">
    <property type="entry name" value="Galactose-binding domain-like"/>
    <property type="match status" value="1"/>
</dbReference>
<dbReference type="Gene3D" id="3.20.20.80">
    <property type="entry name" value="Glycosidases"/>
    <property type="match status" value="1"/>
</dbReference>
<dbReference type="Gene3D" id="2.60.40.10">
    <property type="entry name" value="Immunoglobulins"/>
    <property type="match status" value="3"/>
</dbReference>
<dbReference type="InterPro" id="IPR036156">
    <property type="entry name" value="Beta-gal/glucu_dom_sf"/>
</dbReference>
<dbReference type="InterPro" id="IPR032311">
    <property type="entry name" value="DUF4982"/>
</dbReference>
<dbReference type="InterPro" id="IPR008979">
    <property type="entry name" value="Galactose-bd-like_sf"/>
</dbReference>
<dbReference type="InterPro" id="IPR051913">
    <property type="entry name" value="GH2_Domain-Containing"/>
</dbReference>
<dbReference type="InterPro" id="IPR040605">
    <property type="entry name" value="Glyco_hydro2_dom5"/>
</dbReference>
<dbReference type="InterPro" id="IPR006101">
    <property type="entry name" value="Glyco_hydro_2"/>
</dbReference>
<dbReference type="InterPro" id="IPR023232">
    <property type="entry name" value="Glyco_hydro_2_AS"/>
</dbReference>
<dbReference type="InterPro" id="IPR006103">
    <property type="entry name" value="Glyco_hydro_2_cat"/>
</dbReference>
<dbReference type="InterPro" id="IPR006102">
    <property type="entry name" value="Glyco_hydro_2_Ig-like"/>
</dbReference>
<dbReference type="InterPro" id="IPR006104">
    <property type="entry name" value="Glyco_hydro_2_N"/>
</dbReference>
<dbReference type="InterPro" id="IPR017853">
    <property type="entry name" value="Glycoside_hydrolase_SF"/>
</dbReference>
<dbReference type="InterPro" id="IPR013783">
    <property type="entry name" value="Ig-like_fold"/>
</dbReference>
<dbReference type="InterPro" id="IPR008964">
    <property type="entry name" value="Invasin/intimin_cell_adhesion"/>
</dbReference>
<dbReference type="PANTHER" id="PTHR42732">
    <property type="entry name" value="BETA-GALACTOSIDASE"/>
    <property type="match status" value="1"/>
</dbReference>
<dbReference type="PANTHER" id="PTHR42732:SF1">
    <property type="entry name" value="BETA-MANNOSIDASE"/>
    <property type="match status" value="1"/>
</dbReference>
<dbReference type="Pfam" id="PF16355">
    <property type="entry name" value="DUF4982"/>
    <property type="match status" value="1"/>
</dbReference>
<dbReference type="Pfam" id="PF18565">
    <property type="entry name" value="Glyco_hydro2_C5"/>
    <property type="match status" value="1"/>
</dbReference>
<dbReference type="Pfam" id="PF00703">
    <property type="entry name" value="Glyco_hydro_2"/>
    <property type="match status" value="1"/>
</dbReference>
<dbReference type="Pfam" id="PF02836">
    <property type="entry name" value="Glyco_hydro_2_C"/>
    <property type="match status" value="1"/>
</dbReference>
<dbReference type="Pfam" id="PF02837">
    <property type="entry name" value="Glyco_hydro_2_N"/>
    <property type="match status" value="1"/>
</dbReference>
<dbReference type="PRINTS" id="PR00132">
    <property type="entry name" value="GLHYDRLASE2"/>
</dbReference>
<dbReference type="SUPFAM" id="SSF51445">
    <property type="entry name" value="(Trans)glycosidases"/>
    <property type="match status" value="1"/>
</dbReference>
<dbReference type="SUPFAM" id="SSF49303">
    <property type="entry name" value="beta-Galactosidase/glucuronidase domain"/>
    <property type="match status" value="1"/>
</dbReference>
<dbReference type="SUPFAM" id="SSF49785">
    <property type="entry name" value="Galactose-binding domain-like"/>
    <property type="match status" value="1"/>
</dbReference>
<dbReference type="SUPFAM" id="SSF49373">
    <property type="entry name" value="Invasin/intimin cell-adhesion fragments"/>
    <property type="match status" value="1"/>
</dbReference>
<dbReference type="PROSITE" id="PS00608">
    <property type="entry name" value="GLYCOSYL_HYDROL_F2_2"/>
    <property type="match status" value="1"/>
</dbReference>
<dbReference type="PROSITE" id="PS51257">
    <property type="entry name" value="PROKAR_LIPOPROTEIN"/>
    <property type="match status" value="1"/>
</dbReference>
<organism>
    <name type="scientific">Bacteroides ovatus (strain ATCC 8483 / DSM 1896 / JCM 5824 / BCRC 10623 / CCUG 4943 / NCTC 11153)</name>
    <dbReference type="NCBI Taxonomy" id="411476"/>
    <lineage>
        <taxon>Bacteria</taxon>
        <taxon>Pseudomonadati</taxon>
        <taxon>Bacteroidota</taxon>
        <taxon>Bacteroidia</taxon>
        <taxon>Bacteroidales</taxon>
        <taxon>Bacteroidaceae</taxon>
        <taxon>Bacteroides</taxon>
    </lineage>
</organism>
<comment type="function">
    <text evidence="3">Catalyzes the hydrolysis of terminal non-reducing beta-D-galactose residues in beta-D-galactosides in xyloglucan degradation, converting 'L' units to 'X' units.</text>
</comment>
<comment type="catalytic activity">
    <reaction evidence="3">
        <text>Hydrolysis of terminal non-reducing beta-D-galactose residues in beta-D-galactosides.</text>
        <dbReference type="EC" id="3.2.1.23"/>
    </reaction>
</comment>
<comment type="biophysicochemical properties">
    <kinetics>
        <KM evidence="3">0.087 mM for Gal-beta-PNP</KM>
        <text>kcat is 4.0 sec(-1) for Gal-beta-PNP.</text>
    </kinetics>
    <phDependence>
        <text evidence="3">Optimum pH is 6.0-7.0.</text>
    </phDependence>
</comment>
<comment type="pathway">
    <text evidence="3">Glucan metabolism; xyloglucan degradation.</text>
</comment>
<comment type="subcellular location">
    <subcellularLocation>
        <location evidence="4">Cell inner membrane</location>
        <topology evidence="4">Lipid-anchor</topology>
    </subcellularLocation>
    <text evidence="3">Cell inner membrane localization is predicted by analogy with the archetypal sus locus.</text>
</comment>
<comment type="miscellaneous">
    <text evidence="5">Gut bacteria supply the human body with energy from dietary polysaccharides through glycosidases that are absent in the human genome. Xyloglucans are a ubiquitous family of highly branched plant cell wall polysaccharides present in the vegetables we consume. Enzymes involved in xyloglucan degradation mediate the conversion of otherwise indigestible plant polysaccharides to short-chain fatty acids (PubMed:24463512).</text>
</comment>
<comment type="similarity">
    <text evidence="4">Belongs to the glycosyl hydrolase 2 family.</text>
</comment>
<protein>
    <recommendedName>
        <fullName>Beta-galactosidase BoGH2A</fullName>
        <shortName>Beta-gal</shortName>
        <ecNumber>3.2.1.23</ecNumber>
    </recommendedName>
    <alternativeName>
        <fullName>Glycosyl hydrolase family protein 2A</fullName>
        <shortName>BoGH2A</shortName>
    </alternativeName>
</protein>
<gene>
    <name type="ORF">BACOVA_02645</name>
</gene>
<feature type="signal peptide" evidence="2">
    <location>
        <begin position="1"/>
        <end position="19"/>
    </location>
</feature>
<feature type="chain" id="PRO_0000425891" description="Beta-galactosidase BoGH2A">
    <location>
        <begin position="20"/>
        <end position="851"/>
    </location>
</feature>
<feature type="active site" description="Proton donor" evidence="1">
    <location>
        <position position="437"/>
    </location>
</feature>
<feature type="active site" description="Nucleophile" evidence="1">
    <location>
        <position position="544"/>
    </location>
</feature>
<feature type="lipid moiety-binding region" description="N-palmitoyl cysteine" evidence="2">
    <location>
        <position position="20"/>
    </location>
</feature>
<feature type="lipid moiety-binding region" description="S-diacylglycerol cysteine" evidence="2">
    <location>
        <position position="20"/>
    </location>
</feature>
<reference key="1">
    <citation type="submission" date="2007-04" db="EMBL/GenBank/DDBJ databases">
        <title>Draft genome sequence of Bacteroides ovatus (ATCC 8483).</title>
        <authorList>
            <person name="Sudarsanam P."/>
            <person name="Ley R."/>
            <person name="Guruge J."/>
            <person name="Turnbaugh P.J."/>
            <person name="Mahowald M."/>
            <person name="Liep D."/>
            <person name="Gordon J."/>
        </authorList>
    </citation>
    <scope>NUCLEOTIDE SEQUENCE [LARGE SCALE GENOMIC DNA]</scope>
    <source>
        <strain>ATCC 8483 / DSM 1896 / JCM 5824 / BCRC 10623 / CCUG 4943 / NCTC 11153</strain>
    </source>
</reference>
<reference key="2">
    <citation type="journal article" date="2014" name="Nature">
        <title>A discrete genetic locus confers xyloglucan metabolism in select human gut Bacteroidetes.</title>
        <authorList>
            <person name="Larsbrink J."/>
            <person name="Rogers T.E."/>
            <person name="Hemsworth G.R."/>
            <person name="McKee L.S."/>
            <person name="Tauzin A.S."/>
            <person name="Spadiut O."/>
            <person name="Klinter S."/>
            <person name="Pudlo N.A."/>
            <person name="Urs K."/>
            <person name="Koropatkin N.M."/>
            <person name="Creagh A.L."/>
            <person name="Haynes C.A."/>
            <person name="Kelly A.G."/>
            <person name="Cederholm S.N."/>
            <person name="Davies G.J."/>
            <person name="Martens E.C."/>
            <person name="Brumer H."/>
        </authorList>
    </citation>
    <scope>FUNCTION</scope>
    <scope>CATALYTIC ACTIVITY</scope>
    <scope>BIOPHYSICOCHEMICAL PROPERTIES</scope>
    <scope>PATHWAY</scope>
</reference>
<keyword id="KW-0119">Carbohydrate metabolism</keyword>
<keyword id="KW-0997">Cell inner membrane</keyword>
<keyword id="KW-1003">Cell membrane</keyword>
<keyword id="KW-0326">Glycosidase</keyword>
<keyword id="KW-0378">Hydrolase</keyword>
<keyword id="KW-0449">Lipoprotein</keyword>
<keyword id="KW-0472">Membrane</keyword>
<keyword id="KW-0564">Palmitate</keyword>
<keyword id="KW-0624">Polysaccharide degradation</keyword>
<keyword id="KW-0732">Signal</keyword>
<proteinExistence type="evidence at protein level"/>
<evidence type="ECO:0000250" key="1">
    <source>
        <dbReference type="UniProtKB" id="P00722"/>
    </source>
</evidence>
<evidence type="ECO:0000255" key="2"/>
<evidence type="ECO:0000269" key="3">
    <source>
    </source>
</evidence>
<evidence type="ECO:0000305" key="4"/>
<evidence type="ECO:0000305" key="5">
    <source>
    </source>
</evidence>
<accession>A7LXS9</accession>